<comment type="function">
    <text evidence="1 4">Transcriptional activator of immediate-early (IE) gene products (alpha genes). Acts as a key activator of lytic infection by initiating the lytic program through the assembly of the transcriptional regulatory VP16-induced complex composed of VP16 and two cellular factors, HCFC1 and POU2F1. VP16-induced complex represents a regulatory switch: when it is on, it promotes IE-gene expression and thus lytic infection, and when it is off, it limits IE-gene transcription favoring latent infection (By similarity).</text>
</comment>
<comment type="function">
    <text evidence="5">May play a role in the aggregation of tegument proteins around nucleocapsids during virus morphogenesis.</text>
</comment>
<comment type="subunit">
    <text evidence="1">Associates with the VP16-induced complex; binding to host HCFC1 activates VP16 for association with the octamer motif-binding host protein POU2F1, to form a multiprotein-DNA complex responsible for activating transcription of the viral immediate early genes.</text>
</comment>
<comment type="subcellular location">
    <subcellularLocation>
        <location evidence="2">Virion tegument</location>
    </subcellularLocation>
    <subcellularLocation>
        <location evidence="2">Host nucleus</location>
    </subcellularLocation>
</comment>
<comment type="similarity">
    <text evidence="5">Belongs to the herpesviridae tegument protein VP16 protein family.</text>
</comment>
<proteinExistence type="evidence at protein level"/>
<sequence>MECNLGTEHPSTDTWNRSKTEQAVVDAFDESLFGDVASDIGFETSLYSHAVKTAPSPPWVASPKILYQQLIRDLDFSEGPRLLSCLETWNEDLFSCFPINEDLYSDMMVLSPDPDDVISTVSTKDHVEMFNLTTRGSVRLPSPPKQPTGLPAYVQEVQDSFTVELRAREEAYTKLLVTYCKSIIRYLQGTAKRTTIGLNIQNPDQKAYTQLRQSILLRYYREVASLARLLYLHLYLTVTREFSWRLYASQSAHPDVFAALKFTWTERRQFTCAFHPVLCNHGIVLLEGKPLTASALREINYRRRELGLPLVRCGLVEENKSPLVQQPSFSVHLPRSVGFLTHHIKRKLDAYAVKHPQEPRHVRADHPYAKVVENRNYGSSIEAMILAPPSPSEILPGDPPRPPTCGFLTR</sequence>
<organism>
    <name type="scientific">Varicella-zoster virus (strain Dumas)</name>
    <name type="common">HHV-3</name>
    <name type="synonym">Human herpesvirus 3</name>
    <dbReference type="NCBI Taxonomy" id="10338"/>
    <lineage>
        <taxon>Viruses</taxon>
        <taxon>Duplodnaviria</taxon>
        <taxon>Heunggongvirae</taxon>
        <taxon>Peploviricota</taxon>
        <taxon>Herviviricetes</taxon>
        <taxon>Herpesvirales</taxon>
        <taxon>Orthoherpesviridae</taxon>
        <taxon>Alphaherpesvirinae</taxon>
        <taxon>Varicellovirus</taxon>
        <taxon>Varicellovirus humanalpha3</taxon>
        <taxon>Human herpesvirus 3</taxon>
    </lineage>
</organism>
<gene>
    <name type="ORF">ORF10</name>
</gene>
<reference key="1">
    <citation type="journal article" date="1986" name="J. Gen. Virol.">
        <title>The complete DNA sequence of varicella-zoster virus.</title>
        <authorList>
            <person name="Davison A.J."/>
            <person name="Scott J.E."/>
        </authorList>
    </citation>
    <scope>NUCLEOTIDE SEQUENCE [LARGE SCALE GENOMIC DNA]</scope>
</reference>
<reference key="2">
    <citation type="journal article" date="2005" name="J. Biol. Chem.">
        <title>Combinatorial transcription of herpes simplex virus and varicella zoster virus immediate early genes is strictly determined by the cellular coactivator HCF-1.</title>
        <authorList>
            <person name="Narayanan A."/>
            <person name="Nogueira M.L."/>
            <person name="Ruyechan W.T."/>
            <person name="Kristie T.M."/>
        </authorList>
    </citation>
    <scope>FUNCTION</scope>
    <scope>INTERACTION WITH HUMAN HCFC1</scope>
</reference>
<feature type="chain" id="PRO_0000115805" description="Tegument protein VP16 homolog">
    <location>
        <begin position="1"/>
        <end position="410"/>
    </location>
</feature>
<feature type="region of interest" description="Disordered" evidence="3">
    <location>
        <begin position="388"/>
        <end position="410"/>
    </location>
</feature>
<keyword id="KW-0238">DNA-binding</keyword>
<keyword id="KW-1048">Host nucleus</keyword>
<keyword id="KW-0945">Host-virus interaction</keyword>
<keyword id="KW-0597">Phosphoprotein</keyword>
<keyword id="KW-1185">Reference proteome</keyword>
<keyword id="KW-0804">Transcription</keyword>
<keyword id="KW-0805">Transcription regulation</keyword>
<keyword id="KW-0946">Virion</keyword>
<keyword id="KW-0920">Virion tegument</keyword>
<dbReference type="EMBL" id="X04370">
    <property type="protein sequence ID" value="CAA27893.1"/>
    <property type="molecule type" value="Genomic_DNA"/>
</dbReference>
<dbReference type="PIR" id="A27342">
    <property type="entry name" value="IXBE10"/>
</dbReference>
<dbReference type="SMR" id="P09265"/>
<dbReference type="Proteomes" id="UP000002602">
    <property type="component" value="Genome"/>
</dbReference>
<dbReference type="GO" id="GO:0042025">
    <property type="term" value="C:host cell nucleus"/>
    <property type="evidence" value="ECO:0007669"/>
    <property type="project" value="UniProtKB-SubCell"/>
</dbReference>
<dbReference type="GO" id="GO:0019033">
    <property type="term" value="C:viral tegument"/>
    <property type="evidence" value="ECO:0007669"/>
    <property type="project" value="UniProtKB-SubCell"/>
</dbReference>
<dbReference type="GO" id="GO:0003677">
    <property type="term" value="F:DNA binding"/>
    <property type="evidence" value="ECO:0007669"/>
    <property type="project" value="UniProtKB-KW"/>
</dbReference>
<dbReference type="GO" id="GO:0039695">
    <property type="term" value="P:DNA-templated viral transcription"/>
    <property type="evidence" value="ECO:0000314"/>
    <property type="project" value="UniProtKB"/>
</dbReference>
<dbReference type="GO" id="GO:0006355">
    <property type="term" value="P:regulation of DNA-templated transcription"/>
    <property type="evidence" value="ECO:0007669"/>
    <property type="project" value="InterPro"/>
</dbReference>
<dbReference type="FunFam" id="1.10.1290.10:FF:000001">
    <property type="entry name" value="Tegument protein VP16"/>
    <property type="match status" value="1"/>
</dbReference>
<dbReference type="Gene3D" id="1.10.1290.10">
    <property type="entry name" value="Alpha trans-inducing (Alpha-TIF)"/>
    <property type="match status" value="1"/>
</dbReference>
<dbReference type="InterPro" id="IPR003174">
    <property type="entry name" value="Alpha_TIF"/>
</dbReference>
<dbReference type="InterPro" id="IPR036538">
    <property type="entry name" value="Alpha_TIF_sf"/>
</dbReference>
<dbReference type="Pfam" id="PF02232">
    <property type="entry name" value="Alpha_TIF"/>
    <property type="match status" value="1"/>
</dbReference>
<dbReference type="SMART" id="SM00814">
    <property type="entry name" value="Alpha_TIF"/>
    <property type="match status" value="1"/>
</dbReference>
<dbReference type="SUPFAM" id="SSF56548">
    <property type="entry name" value="Conserved core of transcriptional regulatory protein vp16"/>
    <property type="match status" value="1"/>
</dbReference>
<accession>P09265</accession>
<organismHost>
    <name type="scientific">Homo sapiens</name>
    <name type="common">Human</name>
    <dbReference type="NCBI Taxonomy" id="9606"/>
</organismHost>
<evidence type="ECO:0000250" key="1"/>
<evidence type="ECO:0000250" key="2">
    <source>
        <dbReference type="UniProtKB" id="P04486"/>
    </source>
</evidence>
<evidence type="ECO:0000256" key="3">
    <source>
        <dbReference type="SAM" id="MobiDB-lite"/>
    </source>
</evidence>
<evidence type="ECO:0000269" key="4">
    <source>
    </source>
</evidence>
<evidence type="ECO:0000305" key="5"/>
<protein>
    <recommendedName>
        <fullName>Tegument protein VP16 homolog</fullName>
    </recommendedName>
    <alternativeName>
        <fullName>Alpha trans-inducing protein</fullName>
    </alternativeName>
    <alternativeName>
        <fullName>Alpha-TIF</fullName>
    </alternativeName>
    <alternativeName>
        <fullName>ORF10 protein</fullName>
    </alternativeName>
    <alternativeName>
        <fullName>Tegument protein 10</fullName>
    </alternativeName>
</protein>
<name>VP16_VZVD</name>